<keyword id="KW-0238">DNA-binding</keyword>
<keyword id="KW-0479">Metal-binding</keyword>
<keyword id="KW-0539">Nucleus</keyword>
<keyword id="KW-1185">Reference proteome</keyword>
<keyword id="KW-0677">Repeat</keyword>
<keyword id="KW-0804">Transcription</keyword>
<keyword id="KW-0805">Transcription regulation</keyword>
<keyword id="KW-0862">Zinc</keyword>
<keyword id="KW-0863">Zinc-finger</keyword>
<name>ZG57_XENLA</name>
<comment type="function">
    <text>May be involved in transcriptional regulation.</text>
</comment>
<comment type="subcellular location">
    <subcellularLocation>
        <location evidence="2">Nucleus</location>
    </subcellularLocation>
</comment>
<comment type="similarity">
    <text evidence="2">Belongs to the krueppel C2H2-type zinc-finger protein family.</text>
</comment>
<accession>P18729</accession>
<protein>
    <recommendedName>
        <fullName>Gastrula zinc finger protein XlCGF57.1</fullName>
    </recommendedName>
</protein>
<dbReference type="PIR" id="S06578">
    <property type="entry name" value="S06578"/>
</dbReference>
<dbReference type="SMR" id="P18729"/>
<dbReference type="OrthoDB" id="6436585at2759"/>
<dbReference type="Proteomes" id="UP000186698">
    <property type="component" value="Unplaced"/>
</dbReference>
<dbReference type="GO" id="GO:0005654">
    <property type="term" value="C:nucleoplasm"/>
    <property type="evidence" value="ECO:0000318"/>
    <property type="project" value="GO_Central"/>
</dbReference>
<dbReference type="GO" id="GO:0001227">
    <property type="term" value="F:DNA-binding transcription repressor activity, RNA polymerase II-specific"/>
    <property type="evidence" value="ECO:0000318"/>
    <property type="project" value="GO_Central"/>
</dbReference>
<dbReference type="GO" id="GO:0000978">
    <property type="term" value="F:RNA polymerase II cis-regulatory region sequence-specific DNA binding"/>
    <property type="evidence" value="ECO:0000318"/>
    <property type="project" value="GO_Central"/>
</dbReference>
<dbReference type="GO" id="GO:0008270">
    <property type="term" value="F:zinc ion binding"/>
    <property type="evidence" value="ECO:0007669"/>
    <property type="project" value="UniProtKB-KW"/>
</dbReference>
<dbReference type="GO" id="GO:0000122">
    <property type="term" value="P:negative regulation of transcription by RNA polymerase II"/>
    <property type="evidence" value="ECO:0000318"/>
    <property type="project" value="GO_Central"/>
</dbReference>
<dbReference type="GO" id="GO:0001817">
    <property type="term" value="P:regulation of cytokine production"/>
    <property type="evidence" value="ECO:0000318"/>
    <property type="project" value="GO_Central"/>
</dbReference>
<dbReference type="GO" id="GO:0002682">
    <property type="term" value="P:regulation of immune system process"/>
    <property type="evidence" value="ECO:0000318"/>
    <property type="project" value="GO_Central"/>
</dbReference>
<dbReference type="FunFam" id="3.30.160.60:FF:000097">
    <property type="entry name" value="Zinc finger protein"/>
    <property type="match status" value="1"/>
</dbReference>
<dbReference type="FunFam" id="3.30.160.60:FF:000759">
    <property type="entry name" value="zinc finger protein 16"/>
    <property type="match status" value="6"/>
</dbReference>
<dbReference type="FunFam" id="3.30.160.60:FF:002716">
    <property type="entry name" value="Zinc finger protein 212"/>
    <property type="match status" value="1"/>
</dbReference>
<dbReference type="FunFam" id="3.30.160.60:FF:001530">
    <property type="entry name" value="Zinc finger protein 268"/>
    <property type="match status" value="1"/>
</dbReference>
<dbReference type="FunFam" id="3.30.160.60:FF:001177">
    <property type="entry name" value="Zinc finger protein 33A"/>
    <property type="match status" value="1"/>
</dbReference>
<dbReference type="FunFam" id="3.30.160.60:FF:000912">
    <property type="entry name" value="Zinc finger protein 660"/>
    <property type="match status" value="2"/>
</dbReference>
<dbReference type="Gene3D" id="3.30.160.60">
    <property type="entry name" value="Classic Zinc Finger"/>
    <property type="match status" value="12"/>
</dbReference>
<dbReference type="InterPro" id="IPR036236">
    <property type="entry name" value="Znf_C2H2_sf"/>
</dbReference>
<dbReference type="InterPro" id="IPR013087">
    <property type="entry name" value="Znf_C2H2_type"/>
</dbReference>
<dbReference type="PANTHER" id="PTHR24390:SF236">
    <property type="entry name" value="OOCYTE ZINC FINGER PROTEIN XLCOF6-LIKE"/>
    <property type="match status" value="1"/>
</dbReference>
<dbReference type="PANTHER" id="PTHR24390">
    <property type="entry name" value="ZINC FINGER PROTEIN"/>
    <property type="match status" value="1"/>
</dbReference>
<dbReference type="Pfam" id="PF00096">
    <property type="entry name" value="zf-C2H2"/>
    <property type="match status" value="11"/>
</dbReference>
<dbReference type="SMART" id="SM00355">
    <property type="entry name" value="ZnF_C2H2"/>
    <property type="match status" value="12"/>
</dbReference>
<dbReference type="SUPFAM" id="SSF57667">
    <property type="entry name" value="beta-beta-alpha zinc fingers"/>
    <property type="match status" value="7"/>
</dbReference>
<dbReference type="PROSITE" id="PS00028">
    <property type="entry name" value="ZINC_FINGER_C2H2_1"/>
    <property type="match status" value="11"/>
</dbReference>
<dbReference type="PROSITE" id="PS50157">
    <property type="entry name" value="ZINC_FINGER_C2H2_2"/>
    <property type="match status" value="12"/>
</dbReference>
<proteinExistence type="inferred from homology"/>
<feature type="chain" id="PRO_0000047801" description="Gastrula zinc finger protein XlCGF57.1">
    <location>
        <begin position="1" status="less than"/>
        <end position="336" status="greater than"/>
    </location>
</feature>
<feature type="zinc finger region" description="C2H2-type 1" evidence="1">
    <location>
        <begin position="6"/>
        <end position="28"/>
    </location>
</feature>
<feature type="zinc finger region" description="C2H2-type 2" evidence="1">
    <location>
        <begin position="34"/>
        <end position="56"/>
    </location>
</feature>
<feature type="zinc finger region" description="C2H2-type 3" evidence="1">
    <location>
        <begin position="62"/>
        <end position="84"/>
    </location>
</feature>
<feature type="zinc finger region" description="C2H2-type 4" evidence="1">
    <location>
        <begin position="90"/>
        <end position="112"/>
    </location>
</feature>
<feature type="zinc finger region" description="C2H2-type 5" evidence="1">
    <location>
        <begin position="118"/>
        <end position="140"/>
    </location>
</feature>
<feature type="zinc finger region" description="C2H2-type 6" evidence="1">
    <location>
        <begin position="146"/>
        <end position="168"/>
    </location>
</feature>
<feature type="zinc finger region" description="C2H2-type 7" evidence="1">
    <location>
        <begin position="174"/>
        <end position="196"/>
    </location>
</feature>
<feature type="zinc finger region" description="C2H2-type 8" evidence="1">
    <location>
        <begin position="202"/>
        <end position="224"/>
    </location>
</feature>
<feature type="zinc finger region" description="C2H2-type 9" evidence="1">
    <location>
        <begin position="230"/>
        <end position="252"/>
    </location>
</feature>
<feature type="zinc finger region" description="C2H2-type 10" evidence="1">
    <location>
        <begin position="258"/>
        <end position="280"/>
    </location>
</feature>
<feature type="zinc finger region" description="C2H2-type 11" evidence="1">
    <location>
        <begin position="286"/>
        <end position="308"/>
    </location>
</feature>
<feature type="non-terminal residue">
    <location>
        <position position="1"/>
    </location>
</feature>
<feature type="non-terminal residue">
    <location>
        <position position="336"/>
    </location>
</feature>
<reference key="1">
    <citation type="journal article" date="1989" name="J. Mol. Biol.">
        <title>Second-order repeats in Xenopus laevis finger proteins.</title>
        <authorList>
            <person name="Nietfeld W."/>
            <person name="El-Baradi T."/>
            <person name="Mentzel H."/>
            <person name="Pieler T."/>
            <person name="Koester M."/>
            <person name="Poeting A."/>
            <person name="Knoechel W."/>
        </authorList>
    </citation>
    <scope>NUCLEOTIDE SEQUENCE</scope>
</reference>
<evidence type="ECO:0000255" key="1">
    <source>
        <dbReference type="PROSITE-ProRule" id="PRU00042"/>
    </source>
</evidence>
<evidence type="ECO:0000305" key="2"/>
<sequence length="336" mass="37554">TGGKSYTCTECGKGFIKKSRLVTHMKIHTGETHFICTECGKGFSQKGILQTHMKTHTGEKPFTCTECGKNFAQITTLLRHLTIHTGEKPFSCTECGKHFAHKGHLVSHMKTHTGEKPFTCTECGKHFAQKGHLVSHMKTHTGEKPFTCTECGKNFAQKTNLLCHLKIHTGEKPFTCTECGDKFAKKNNLLRHLKIHTGEKPFTCTECGKAFTLKGSLVGHMKIHTGEKPFSCTQCGKNFTQKNSLLCHLTMHTGEKPFTCTECGKGFALKGNLVLHTKIHTGEKPFSCTQCGKNFAQKNSLLRHLKIHTREKPFTYSECGKKYSQIVNLASHMKIH</sequence>
<organism>
    <name type="scientific">Xenopus laevis</name>
    <name type="common">African clawed frog</name>
    <dbReference type="NCBI Taxonomy" id="8355"/>
    <lineage>
        <taxon>Eukaryota</taxon>
        <taxon>Metazoa</taxon>
        <taxon>Chordata</taxon>
        <taxon>Craniata</taxon>
        <taxon>Vertebrata</taxon>
        <taxon>Euteleostomi</taxon>
        <taxon>Amphibia</taxon>
        <taxon>Batrachia</taxon>
        <taxon>Anura</taxon>
        <taxon>Pipoidea</taxon>
        <taxon>Pipidae</taxon>
        <taxon>Xenopodinae</taxon>
        <taxon>Xenopus</taxon>
        <taxon>Xenopus</taxon>
    </lineage>
</organism>